<feature type="chain" id="PRO_0000142123" description="Imidazole glycerol phosphate synthase subunit HisF">
    <location>
        <begin position="1"/>
        <end position="256"/>
    </location>
</feature>
<feature type="active site" evidence="1">
    <location>
        <position position="12"/>
    </location>
</feature>
<feature type="active site" evidence="1">
    <location>
        <position position="131"/>
    </location>
</feature>
<keyword id="KW-0028">Amino-acid biosynthesis</keyword>
<keyword id="KW-0963">Cytoplasm</keyword>
<keyword id="KW-0368">Histidine biosynthesis</keyword>
<keyword id="KW-0456">Lyase</keyword>
<keyword id="KW-1185">Reference proteome</keyword>
<accession>Q8G6F7</accession>
<reference key="1">
    <citation type="journal article" date="2002" name="Proc. Natl. Acad. Sci. U.S.A.">
        <title>The genome sequence of Bifidobacterium longum reflects its adaptation to the human gastrointestinal tract.</title>
        <authorList>
            <person name="Schell M.A."/>
            <person name="Karmirantzou M."/>
            <person name="Snel B."/>
            <person name="Vilanova D."/>
            <person name="Berger B."/>
            <person name="Pessi G."/>
            <person name="Zwahlen M.-C."/>
            <person name="Desiere F."/>
            <person name="Bork P."/>
            <person name="Delley M."/>
            <person name="Pridmore R.D."/>
            <person name="Arigoni F."/>
        </authorList>
    </citation>
    <scope>NUCLEOTIDE SEQUENCE [LARGE SCALE GENOMIC DNA]</scope>
    <source>
        <strain>NCC 2705</strain>
    </source>
</reference>
<dbReference type="EC" id="4.3.2.10" evidence="1"/>
<dbReference type="EMBL" id="AE014295">
    <property type="protein sequence ID" value="AAN24505.1"/>
    <property type="molecule type" value="Genomic_DNA"/>
</dbReference>
<dbReference type="RefSeq" id="NP_695869.1">
    <property type="nucleotide sequence ID" value="NC_004307.2"/>
</dbReference>
<dbReference type="RefSeq" id="WP_011068099.1">
    <property type="nucleotide sequence ID" value="NC_004307.2"/>
</dbReference>
<dbReference type="SMR" id="Q8G6F7"/>
<dbReference type="STRING" id="206672.BL0685"/>
<dbReference type="EnsemblBacteria" id="AAN24505">
    <property type="protein sequence ID" value="AAN24505"/>
    <property type="gene ID" value="BL0685"/>
</dbReference>
<dbReference type="KEGG" id="blo:BL0685"/>
<dbReference type="PATRIC" id="fig|206672.9.peg.383"/>
<dbReference type="HOGENOM" id="CLU_048577_4_0_11"/>
<dbReference type="OrthoDB" id="9781903at2"/>
<dbReference type="PhylomeDB" id="Q8G6F7"/>
<dbReference type="UniPathway" id="UPA00031">
    <property type="reaction ID" value="UER00010"/>
</dbReference>
<dbReference type="Proteomes" id="UP000000439">
    <property type="component" value="Chromosome"/>
</dbReference>
<dbReference type="GO" id="GO:0005737">
    <property type="term" value="C:cytoplasm"/>
    <property type="evidence" value="ECO:0007669"/>
    <property type="project" value="UniProtKB-SubCell"/>
</dbReference>
<dbReference type="GO" id="GO:0000107">
    <property type="term" value="F:imidazoleglycerol-phosphate synthase activity"/>
    <property type="evidence" value="ECO:0007669"/>
    <property type="project" value="UniProtKB-UniRule"/>
</dbReference>
<dbReference type="GO" id="GO:0016829">
    <property type="term" value="F:lyase activity"/>
    <property type="evidence" value="ECO:0007669"/>
    <property type="project" value="UniProtKB-KW"/>
</dbReference>
<dbReference type="GO" id="GO:0000105">
    <property type="term" value="P:L-histidine biosynthetic process"/>
    <property type="evidence" value="ECO:0007669"/>
    <property type="project" value="UniProtKB-UniRule"/>
</dbReference>
<dbReference type="CDD" id="cd04731">
    <property type="entry name" value="HisF"/>
    <property type="match status" value="1"/>
</dbReference>
<dbReference type="FunFam" id="3.20.20.70:FF:000006">
    <property type="entry name" value="Imidazole glycerol phosphate synthase subunit HisF"/>
    <property type="match status" value="1"/>
</dbReference>
<dbReference type="Gene3D" id="3.20.20.70">
    <property type="entry name" value="Aldolase class I"/>
    <property type="match status" value="1"/>
</dbReference>
<dbReference type="HAMAP" id="MF_01013">
    <property type="entry name" value="HisF"/>
    <property type="match status" value="1"/>
</dbReference>
<dbReference type="InterPro" id="IPR013785">
    <property type="entry name" value="Aldolase_TIM"/>
</dbReference>
<dbReference type="InterPro" id="IPR006062">
    <property type="entry name" value="His_biosynth"/>
</dbReference>
<dbReference type="InterPro" id="IPR004651">
    <property type="entry name" value="HisF"/>
</dbReference>
<dbReference type="InterPro" id="IPR050064">
    <property type="entry name" value="IGPS_HisA/HisF"/>
</dbReference>
<dbReference type="InterPro" id="IPR011060">
    <property type="entry name" value="RibuloseP-bd_barrel"/>
</dbReference>
<dbReference type="NCBIfam" id="TIGR00735">
    <property type="entry name" value="hisF"/>
    <property type="match status" value="1"/>
</dbReference>
<dbReference type="PANTHER" id="PTHR21235:SF2">
    <property type="entry name" value="IMIDAZOLE GLYCEROL PHOSPHATE SYNTHASE HISHF"/>
    <property type="match status" value="1"/>
</dbReference>
<dbReference type="PANTHER" id="PTHR21235">
    <property type="entry name" value="IMIDAZOLE GLYCEROL PHOSPHATE SYNTHASE SUBUNIT HISF/H IGP SYNTHASE SUBUNIT HISF/H"/>
    <property type="match status" value="1"/>
</dbReference>
<dbReference type="Pfam" id="PF00977">
    <property type="entry name" value="His_biosynth"/>
    <property type="match status" value="1"/>
</dbReference>
<dbReference type="SUPFAM" id="SSF51366">
    <property type="entry name" value="Ribulose-phoshate binding barrel"/>
    <property type="match status" value="1"/>
</dbReference>
<comment type="function">
    <text evidence="1">IGPS catalyzes the conversion of PRFAR and glutamine to IGP, AICAR and glutamate. The HisF subunit catalyzes the cyclization activity that produces IGP and AICAR from PRFAR using the ammonia provided by the HisH subunit.</text>
</comment>
<comment type="catalytic activity">
    <reaction evidence="1">
        <text>5-[(5-phospho-1-deoxy-D-ribulos-1-ylimino)methylamino]-1-(5-phospho-beta-D-ribosyl)imidazole-4-carboxamide + L-glutamine = D-erythro-1-(imidazol-4-yl)glycerol 3-phosphate + 5-amino-1-(5-phospho-beta-D-ribosyl)imidazole-4-carboxamide + L-glutamate + H(+)</text>
        <dbReference type="Rhea" id="RHEA:24793"/>
        <dbReference type="ChEBI" id="CHEBI:15378"/>
        <dbReference type="ChEBI" id="CHEBI:29985"/>
        <dbReference type="ChEBI" id="CHEBI:58278"/>
        <dbReference type="ChEBI" id="CHEBI:58359"/>
        <dbReference type="ChEBI" id="CHEBI:58475"/>
        <dbReference type="ChEBI" id="CHEBI:58525"/>
        <dbReference type="EC" id="4.3.2.10"/>
    </reaction>
</comment>
<comment type="pathway">
    <text evidence="1">Amino-acid biosynthesis; L-histidine biosynthesis; L-histidine from 5-phospho-alpha-D-ribose 1-diphosphate: step 5/9.</text>
</comment>
<comment type="subunit">
    <text evidence="1">Heterodimer of HisH and HisF.</text>
</comment>
<comment type="subcellular location">
    <subcellularLocation>
        <location evidence="1">Cytoplasm</location>
    </subcellularLocation>
</comment>
<comment type="similarity">
    <text evidence="1">Belongs to the HisA/HisF family.</text>
</comment>
<protein>
    <recommendedName>
        <fullName evidence="1">Imidazole glycerol phosphate synthase subunit HisF</fullName>
        <ecNumber evidence="1">4.3.2.10</ecNumber>
    </recommendedName>
    <alternativeName>
        <fullName evidence="1">IGP synthase cyclase subunit</fullName>
    </alternativeName>
    <alternativeName>
        <fullName evidence="1">IGP synthase subunit HisF</fullName>
    </alternativeName>
    <alternativeName>
        <fullName evidence="1">ImGP synthase subunit HisF</fullName>
        <shortName evidence="1">IGPS subunit HisF</shortName>
    </alternativeName>
</protein>
<name>HIS6_BIFLO</name>
<sequence>MSLAVRVIPCLDVDAGRVVKGVHFENLKDAGDPVELAAEYYRQRADEITFLDVTASSSHRNTMIDVVSRTAEQVFIPMTVGGGVRTPEDVDSLLRCGADKVGVNTAAINDPSLISRVADRFGNQVLVLSVDARREKGEQHTQSGFEVTTMGGRKSTGIDAIWWVKRAEQLGAGEILLNSMDADGTKEGFDLEMIRAVRKEVKIPIIASGGAGKVEDFPPAIEAGADAVLAASVFHYGILTIADVKAELKKHGYTVR</sequence>
<evidence type="ECO:0000255" key="1">
    <source>
        <dbReference type="HAMAP-Rule" id="MF_01013"/>
    </source>
</evidence>
<proteinExistence type="inferred from homology"/>
<gene>
    <name evidence="1" type="primary">hisF</name>
    <name type="ordered locus">BL0685</name>
</gene>
<organism>
    <name type="scientific">Bifidobacterium longum (strain NCC 2705)</name>
    <dbReference type="NCBI Taxonomy" id="206672"/>
    <lineage>
        <taxon>Bacteria</taxon>
        <taxon>Bacillati</taxon>
        <taxon>Actinomycetota</taxon>
        <taxon>Actinomycetes</taxon>
        <taxon>Bifidobacteriales</taxon>
        <taxon>Bifidobacteriaceae</taxon>
        <taxon>Bifidobacterium</taxon>
    </lineage>
</organism>